<dbReference type="EMBL" id="AC246793">
    <property type="status" value="NOT_ANNOTATED_CDS"/>
    <property type="molecule type" value="Genomic_DNA"/>
</dbReference>
<dbReference type="SMR" id="A0A0A0MS00"/>
<dbReference type="FunCoup" id="A0A0A0MS00">
    <property type="interactions" value="166"/>
</dbReference>
<dbReference type="GlyCosmos" id="A0A0A0MS00">
    <property type="glycosylation" value="1 site, No reported glycans"/>
</dbReference>
<dbReference type="GlyGen" id="A0A0A0MS00">
    <property type="glycosylation" value="1 site"/>
</dbReference>
<dbReference type="BioMuta" id="IGLV3-32"/>
<dbReference type="MassIVE" id="A0A0A0MS00"/>
<dbReference type="Ensembl" id="ENST00000390303.3">
    <property type="protein sequence ID" value="ENSP00000374838.3"/>
    <property type="gene ID" value="ENSG00000211657.3"/>
</dbReference>
<dbReference type="Ensembl" id="ENST00000627634.1">
    <property type="protein sequence ID" value="ENSP00000485820.1"/>
    <property type="gene ID" value="ENSG00000280866.1"/>
</dbReference>
<dbReference type="UCSC" id="uc062cck.1">
    <property type="organism name" value="human"/>
</dbReference>
<dbReference type="AGR" id="HGNC:5914"/>
<dbReference type="GeneCards" id="IGLV3-32"/>
<dbReference type="HGNC" id="HGNC:5914">
    <property type="gene designation" value="IGLV3-32"/>
</dbReference>
<dbReference type="HPA" id="ENSG00000211657">
    <property type="expression patterns" value="Tissue enhanced (urinary)"/>
</dbReference>
<dbReference type="neXtProt" id="NX_A0A0A0MS00"/>
<dbReference type="VEuPathDB" id="HostDB:ENSG00000211657"/>
<dbReference type="GeneTree" id="ENSGT00940000153120"/>
<dbReference type="HOGENOM" id="CLU_077975_4_0_1"/>
<dbReference type="InParanoid" id="A0A0A0MS00"/>
<dbReference type="OMA" id="GRKSAQW"/>
<dbReference type="OrthoDB" id="9531984at2759"/>
<dbReference type="PAN-GO" id="A0A0A0MS00">
    <property type="GO annotations" value="3 GO annotations based on evolutionary models"/>
</dbReference>
<dbReference type="SignaLink" id="A0A0A0MS00"/>
<dbReference type="PRO" id="PR:A0A0A0MS00"/>
<dbReference type="Proteomes" id="UP000005640">
    <property type="component" value="Chromosome 22"/>
</dbReference>
<dbReference type="RNAct" id="A0A0A0MS00">
    <property type="molecule type" value="protein"/>
</dbReference>
<dbReference type="Bgee" id="ENSG00000211657">
    <property type="expression patterns" value="Expressed in primordial germ cell in gonad and 34 other cell types or tissues"/>
</dbReference>
<dbReference type="GO" id="GO:0005576">
    <property type="term" value="C:extracellular region"/>
    <property type="evidence" value="ECO:0007669"/>
    <property type="project" value="UniProtKB-SubCell"/>
</dbReference>
<dbReference type="GO" id="GO:0019814">
    <property type="term" value="C:immunoglobulin complex"/>
    <property type="evidence" value="ECO:0000318"/>
    <property type="project" value="GO_Central"/>
</dbReference>
<dbReference type="GO" id="GO:0005886">
    <property type="term" value="C:plasma membrane"/>
    <property type="evidence" value="ECO:0007669"/>
    <property type="project" value="UniProtKB-SubCell"/>
</dbReference>
<dbReference type="GO" id="GO:0002250">
    <property type="term" value="P:adaptive immune response"/>
    <property type="evidence" value="ECO:0007669"/>
    <property type="project" value="UniProtKB-KW"/>
</dbReference>
<dbReference type="GO" id="GO:0006955">
    <property type="term" value="P:immune response"/>
    <property type="evidence" value="ECO:0000318"/>
    <property type="project" value="GO_Central"/>
</dbReference>
<dbReference type="FunFam" id="2.60.40.10:FF:000620">
    <property type="entry name" value="Immunoglobulin lambda locus"/>
    <property type="match status" value="1"/>
</dbReference>
<dbReference type="Gene3D" id="2.60.40.10">
    <property type="entry name" value="Immunoglobulins"/>
    <property type="match status" value="1"/>
</dbReference>
<dbReference type="InterPro" id="IPR007110">
    <property type="entry name" value="Ig-like_dom"/>
</dbReference>
<dbReference type="InterPro" id="IPR036179">
    <property type="entry name" value="Ig-like_dom_sf"/>
</dbReference>
<dbReference type="InterPro" id="IPR013783">
    <property type="entry name" value="Ig-like_fold"/>
</dbReference>
<dbReference type="InterPro" id="IPR013106">
    <property type="entry name" value="Ig_V-set"/>
</dbReference>
<dbReference type="InterPro" id="IPR050150">
    <property type="entry name" value="IgV_Light_Chain"/>
</dbReference>
<dbReference type="PANTHER" id="PTHR23267">
    <property type="entry name" value="IMMUNOGLOBULIN LIGHT CHAIN"/>
    <property type="match status" value="1"/>
</dbReference>
<dbReference type="Pfam" id="PF07686">
    <property type="entry name" value="V-set"/>
    <property type="match status" value="1"/>
</dbReference>
<dbReference type="SMART" id="SM00406">
    <property type="entry name" value="IGv"/>
    <property type="match status" value="1"/>
</dbReference>
<dbReference type="SUPFAM" id="SSF48726">
    <property type="entry name" value="Immunoglobulin"/>
    <property type="match status" value="1"/>
</dbReference>
<dbReference type="PROSITE" id="PS50835">
    <property type="entry name" value="IG_LIKE"/>
    <property type="match status" value="1"/>
</dbReference>
<feature type="signal peptide" evidence="2">
    <location>
        <begin position="1"/>
        <end position="19"/>
    </location>
</feature>
<feature type="chain" id="PRO_5014015960" description="Probable non-functional immunoglobulin lambda variable 3-32" evidence="2">
    <location>
        <begin position="20"/>
        <end position="114"/>
    </location>
</feature>
<feature type="domain" description="Ig-like" evidence="3">
    <location>
        <begin position="20"/>
        <end position="114" status="greater than"/>
    </location>
</feature>
<feature type="region of interest" description="Framework-2" evidence="1">
    <location>
        <begin position="20"/>
        <end position="40"/>
    </location>
</feature>
<feature type="region of interest" description="Complementarity-determining-1" evidence="1">
    <location>
        <begin position="41"/>
        <end position="49"/>
    </location>
</feature>
<feature type="region of interest" description="Framework-2" evidence="1">
    <location>
        <begin position="50"/>
        <end position="66"/>
    </location>
</feature>
<feature type="region of interest" description="Complementarity-determining-2" evidence="1">
    <location>
        <begin position="67"/>
        <end position="69"/>
    </location>
</feature>
<feature type="region of interest" description="Framework-3" evidence="1">
    <location>
        <begin position="70"/>
        <end position="105"/>
    </location>
</feature>
<feature type="region of interest" description="Complementarity-determining-3" evidence="1">
    <location>
        <begin position="106"/>
        <end position="114" status="greater than"/>
    </location>
</feature>
<feature type="glycosylation site" description="N-linked (GlcNAc...) asparagine" evidence="2">
    <location>
        <position position="86"/>
    </location>
</feature>
<feature type="non-terminal residue">
    <location>
        <position position="114"/>
    </location>
</feature>
<gene>
    <name evidence="4 10 12" type="primary">IGLV3-32</name>
</gene>
<evidence type="ECO:0000250" key="1">
    <source>
        <dbReference type="UniProtKB" id="P01721"/>
    </source>
</evidence>
<evidence type="ECO:0000255" key="2"/>
<evidence type="ECO:0000255" key="3">
    <source>
        <dbReference type="PROSITE-ProRule" id="PRU00114"/>
    </source>
</evidence>
<evidence type="ECO:0000303" key="4">
    <source>
    </source>
</evidence>
<evidence type="ECO:0000303" key="5">
    <source>
    </source>
</evidence>
<evidence type="ECO:0000303" key="6">
    <source>
    </source>
</evidence>
<evidence type="ECO:0000303" key="7">
    <source>
    </source>
</evidence>
<evidence type="ECO:0000303" key="8">
    <source>
    </source>
</evidence>
<evidence type="ECO:0000303" key="9">
    <source>
    </source>
</evidence>
<evidence type="ECO:0000303" key="10">
    <source ref="4"/>
</evidence>
<evidence type="ECO:0000305" key="11"/>
<evidence type="ECO:0000312" key="12">
    <source>
        <dbReference type="HGNC" id="HGNC:5914"/>
    </source>
</evidence>
<protein>
    <recommendedName>
        <fullName evidence="11">Probable non-functional immunoglobulin lambda variable 3-32</fullName>
    </recommendedName>
</protein>
<organism>
    <name type="scientific">Homo sapiens</name>
    <name type="common">Human</name>
    <dbReference type="NCBI Taxonomy" id="9606"/>
    <lineage>
        <taxon>Eukaryota</taxon>
        <taxon>Metazoa</taxon>
        <taxon>Chordata</taxon>
        <taxon>Craniata</taxon>
        <taxon>Vertebrata</taxon>
        <taxon>Euteleostomi</taxon>
        <taxon>Mammalia</taxon>
        <taxon>Eutheria</taxon>
        <taxon>Euarchontoglires</taxon>
        <taxon>Primates</taxon>
        <taxon>Haplorrhini</taxon>
        <taxon>Catarrhini</taxon>
        <taxon>Hominidae</taxon>
        <taxon>Homo</taxon>
    </lineage>
</organism>
<sequence length="114" mass="12355">MAWTPPLLVLTLCTGSVISSGPTQVPAVSVALGQMARITCQGDSMEGSYEHWYQQKPGQAPVLVIYDSSDRPSRIPERFSGSKSGNTTTLTITGAQAEDEADYYYQLIDNHATQ</sequence>
<name>LV332_HUMAN</name>
<proteinExistence type="evidence at protein level"/>
<reference key="1">
    <citation type="journal article" date="1999" name="Nature">
        <title>The DNA sequence of human chromosome 22.</title>
        <authorList>
            <person name="Dunham I."/>
            <person name="Hunt A.R."/>
            <person name="Collins J.E."/>
            <person name="Bruskiewich R."/>
            <person name="Beare D.M."/>
            <person name="Clamp M."/>
            <person name="Smink L.J."/>
            <person name="Ainscough R."/>
            <person name="Almeida J.P."/>
            <person name="Babbage A.K."/>
            <person name="Bagguley C."/>
            <person name="Bailey J."/>
            <person name="Barlow K.F."/>
            <person name="Bates K.N."/>
            <person name="Beasley O.P."/>
            <person name="Bird C.P."/>
            <person name="Blakey S.E."/>
            <person name="Bridgeman A.M."/>
            <person name="Buck D."/>
            <person name="Burgess J."/>
            <person name="Burrill W.D."/>
            <person name="Burton J."/>
            <person name="Carder C."/>
            <person name="Carter N.P."/>
            <person name="Chen Y."/>
            <person name="Clark G."/>
            <person name="Clegg S.M."/>
            <person name="Cobley V.E."/>
            <person name="Cole C.G."/>
            <person name="Collier R.E."/>
            <person name="Connor R."/>
            <person name="Conroy D."/>
            <person name="Corby N.R."/>
            <person name="Coville G.J."/>
            <person name="Cox A.V."/>
            <person name="Davis J."/>
            <person name="Dawson E."/>
            <person name="Dhami P.D."/>
            <person name="Dockree C."/>
            <person name="Dodsworth S.J."/>
            <person name="Durbin R.M."/>
            <person name="Ellington A.G."/>
            <person name="Evans K.L."/>
            <person name="Fey J.M."/>
            <person name="Fleming K."/>
            <person name="French L."/>
            <person name="Garner A.A."/>
            <person name="Gilbert J.G.R."/>
            <person name="Goward M.E."/>
            <person name="Grafham D.V."/>
            <person name="Griffiths M.N.D."/>
            <person name="Hall C."/>
            <person name="Hall R.E."/>
            <person name="Hall-Tamlyn G."/>
            <person name="Heathcott R.W."/>
            <person name="Ho S."/>
            <person name="Holmes S."/>
            <person name="Hunt S.E."/>
            <person name="Jones M.C."/>
            <person name="Kershaw J."/>
            <person name="Kimberley A.M."/>
            <person name="King A."/>
            <person name="Laird G.K."/>
            <person name="Langford C.F."/>
            <person name="Leversha M.A."/>
            <person name="Lloyd C."/>
            <person name="Lloyd D.M."/>
            <person name="Martyn I.D."/>
            <person name="Mashreghi-Mohammadi M."/>
            <person name="Matthews L.H."/>
            <person name="Mccann O.T."/>
            <person name="Mcclay J."/>
            <person name="Mclaren S."/>
            <person name="McMurray A.A."/>
            <person name="Milne S.A."/>
            <person name="Mortimore B.J."/>
            <person name="Odell C.N."/>
            <person name="Pavitt R."/>
            <person name="Pearce A.V."/>
            <person name="Pearson D."/>
            <person name="Phillimore B.J.C.T."/>
            <person name="Phillips S.H."/>
            <person name="Plumb R.W."/>
            <person name="Ramsay H."/>
            <person name="Ramsey Y."/>
            <person name="Rogers L."/>
            <person name="Ross M.T."/>
            <person name="Scott C.E."/>
            <person name="Sehra H.K."/>
            <person name="Skuce C.D."/>
            <person name="Smalley S."/>
            <person name="Smith M.L."/>
            <person name="Soderlund C."/>
            <person name="Spragon L."/>
            <person name="Steward C.A."/>
            <person name="Sulston J.E."/>
            <person name="Swann R.M."/>
            <person name="Vaudin M."/>
            <person name="Wall M."/>
            <person name="Wallis J.M."/>
            <person name="Whiteley M.N."/>
            <person name="Willey D.L."/>
            <person name="Williams L."/>
            <person name="Williams S.A."/>
            <person name="Williamson H."/>
            <person name="Wilmer T.E."/>
            <person name="Wilming L."/>
            <person name="Wright C.L."/>
            <person name="Hubbard T."/>
            <person name="Bentley D.R."/>
            <person name="Beck S."/>
            <person name="Rogers J."/>
            <person name="Shimizu N."/>
            <person name="Minoshima S."/>
            <person name="Kawasaki K."/>
            <person name="Sasaki T."/>
            <person name="Asakawa S."/>
            <person name="Kudoh J."/>
            <person name="Shintani A."/>
            <person name="Shibuya K."/>
            <person name="Yoshizaki Y."/>
            <person name="Aoki N."/>
            <person name="Mitsuyama S."/>
            <person name="Roe B.A."/>
            <person name="Chen F."/>
            <person name="Chu L."/>
            <person name="Crabtree J."/>
            <person name="Deschamps S."/>
            <person name="Do A."/>
            <person name="Do T."/>
            <person name="Dorman A."/>
            <person name="Fang F."/>
            <person name="Fu Y."/>
            <person name="Hu P."/>
            <person name="Hua A."/>
            <person name="Kenton S."/>
            <person name="Lai H."/>
            <person name="Lao H.I."/>
            <person name="Lewis J."/>
            <person name="Lewis S."/>
            <person name="Lin S.-P."/>
            <person name="Loh P."/>
            <person name="Malaj E."/>
            <person name="Nguyen T."/>
            <person name="Pan H."/>
            <person name="Phan S."/>
            <person name="Qi S."/>
            <person name="Qian Y."/>
            <person name="Ray L."/>
            <person name="Ren Q."/>
            <person name="Shaull S."/>
            <person name="Sloan D."/>
            <person name="Song L."/>
            <person name="Wang Q."/>
            <person name="Wang Y."/>
            <person name="Wang Z."/>
            <person name="White J."/>
            <person name="Willingham D."/>
            <person name="Wu H."/>
            <person name="Yao Z."/>
            <person name="Zhan M."/>
            <person name="Zhang G."/>
            <person name="Chissoe S."/>
            <person name="Murray J."/>
            <person name="Miller N."/>
            <person name="Minx P."/>
            <person name="Fulton R."/>
            <person name="Johnson D."/>
            <person name="Bemis G."/>
            <person name="Bentley D."/>
            <person name="Bradshaw H."/>
            <person name="Bourne S."/>
            <person name="Cordes M."/>
            <person name="Du Z."/>
            <person name="Fulton L."/>
            <person name="Goela D."/>
            <person name="Graves T."/>
            <person name="Hawkins J."/>
            <person name="Hinds K."/>
            <person name="Kemp K."/>
            <person name="Latreille P."/>
            <person name="Layman D."/>
            <person name="Ozersky P."/>
            <person name="Rohlfing T."/>
            <person name="Scheet P."/>
            <person name="Walker C."/>
            <person name="Wamsley A."/>
            <person name="Wohldmann P."/>
            <person name="Pepin K."/>
            <person name="Nelson J."/>
            <person name="Korf I."/>
            <person name="Bedell J.A."/>
            <person name="Hillier L.W."/>
            <person name="Mardis E."/>
            <person name="Waterston R."/>
            <person name="Wilson R."/>
            <person name="Emanuel B.S."/>
            <person name="Shaikh T."/>
            <person name="Kurahashi H."/>
            <person name="Saitta S."/>
            <person name="Budarf M.L."/>
            <person name="McDermid H.E."/>
            <person name="Johnson A."/>
            <person name="Wong A.C.C."/>
            <person name="Morrow B.E."/>
            <person name="Edelmann L."/>
            <person name="Kim U.J."/>
            <person name="Shizuya H."/>
            <person name="Simon M.I."/>
            <person name="Dumanski J.P."/>
            <person name="Peyrard M."/>
            <person name="Kedra D."/>
            <person name="Seroussi E."/>
            <person name="Fransson I."/>
            <person name="Tapia I."/>
            <person name="Bruder C.E."/>
            <person name="O'Brien K.P."/>
            <person name="Wilkinson P."/>
            <person name="Bodenteich A."/>
            <person name="Hartman K."/>
            <person name="Hu X."/>
            <person name="Khan A.S."/>
            <person name="Lane L."/>
            <person name="Tilahun Y."/>
            <person name="Wright H."/>
        </authorList>
    </citation>
    <scope>NUCLEOTIDE SEQUENCE [LARGE SCALE GENOMIC DNA] (IMGT ALLELE IGLV3-32*01)</scope>
</reference>
<reference key="2">
    <citation type="journal article" date="1998" name="Exp. Clin. Immunogenet.">
        <title>IMGT (ImMunoGeneTics) locus on focus. A new section of Experimental and Clinical Immunogenetics.</title>
        <authorList>
            <person name="Lefranc M.P."/>
        </authorList>
    </citation>
    <scope>CHARACTERIZATION</scope>
</reference>
<reference key="3">
    <citation type="journal article" date="2001" name="Exp. Clin. Immunogenet.">
        <title>Nomenclature of the human immunoglobulin heavy (IGH) genes.</title>
        <authorList>
            <person name="Lefranc M.P."/>
        </authorList>
    </citation>
    <scope>NOMENCLATURE</scope>
</reference>
<reference key="4">
    <citation type="book" date="2001" name="The Immunoglobulin FactsBook.">
        <title>The Immunoglobulin FactsBook.</title>
        <editorList>
            <person name="Lefranc M.P."/>
            <person name="Lefranc G."/>
        </editorList>
        <authorList>
            <person name="Lefranc M.P."/>
            <person name="Lefranc G."/>
        </authorList>
    </citation>
    <scope>NOMENCLATURE</scope>
</reference>
<reference key="5">
    <citation type="journal article" date="2007" name="Annu. Rev. Genet.">
        <title>Immunoglobulin somatic hypermutation.</title>
        <authorList>
            <person name="Teng G."/>
            <person name="Papavasiliou F.N."/>
        </authorList>
    </citation>
    <scope>REVIEW ON SOMATIC HYPERMUTATION</scope>
</reference>
<reference key="6">
    <citation type="journal article" date="2010" name="J. Allergy Clin. Immunol.">
        <title>Structure and function of immunoglobulins.</title>
        <authorList>
            <person name="Schroeder H.W. Jr."/>
            <person name="Cavacini L."/>
        </authorList>
    </citation>
    <scope>REVIEW ON IMMUNOGLOBULINS</scope>
</reference>
<reference key="7">
    <citation type="journal article" date="2012" name="Nat. Rev. Immunol.">
        <title>Molecular programming of B cell memory.</title>
        <authorList>
            <person name="McHeyzer-Williams M."/>
            <person name="Okitsu S."/>
            <person name="Wang N."/>
            <person name="McHeyzer-Williams L."/>
        </authorList>
    </citation>
    <scope>REVIEW ON FUNCTION</scope>
</reference>
<reference key="8">
    <citation type="journal article" date="2014" name="Front. Immunol.">
        <title>Immunoglobulin and T Cell Receptor Genes: IMGT((R)) and the Birth and Rise of Immunoinformatics.</title>
        <authorList>
            <person name="Lefranc M.P."/>
        </authorList>
    </citation>
    <scope>NOMENCLATURE</scope>
</reference>
<accession>A0A0A0MS00</accession>
<comment type="function">
    <text evidence="5 6 7 8 9">Probable non-functional open reading frame (ORF) of V region of the variable domain of immunoglobulin light chains (PubMed:24600447). Non-functional ORF generally cannot participate in the synthesis of a productive immunoglobulin chain due to altered V-(D)-J or switch recombination and/or splicing site (at mRNA level) and/or conserved amino acid change (protein level) (PubMed:9619395). Immunoglobulins, also known as antibodies, are membrane-bound or secreted glycoproteins produced by B lymphocytes. In the recognition phase of humoral immunity, the membrane-bound immunoglobulins serve as receptors which, upon binding of a specific antigen, trigger the clonal expansion and differentiation of B lymphocytes into immunoglobulins-secreting plasma cells. Secreted immunoglobulins mediate the effector phase of humoral immunity, which results in the elimination of bound antigens (PubMed:20176268, PubMed:22158414). The antigen binding site is formed by the variable domain of one heavy chain, together with that of its associated light chain. Thus, each immunoglobulin has two antigen binding sites with remarkable affinity for a particular antigen. The variable domains are assembled by a process called V-(D)-J rearrangement and can then be subjected to somatic hypermutations which, after exposure to antigen and selection, allow affinity maturation for a particular antigen (PubMed:17576170, PubMed:20176268).</text>
</comment>
<comment type="subunit">
    <text evidence="6 11">Most probably, the immunoglobulin is not assembled due to incorrect folding of light chain (Probable). Immunoglobulins are composed of two identical heavy chains and two identical light chains; disulfide-linked.</text>
</comment>
<comment type="subcellular location">
    <subcellularLocation>
        <location evidence="6 7">Secreted</location>
    </subcellularLocation>
    <subcellularLocation>
        <location evidence="6 7">Cell membrane</location>
    </subcellularLocation>
</comment>
<comment type="polymorphism">
    <text evidence="11">There are several alleles. The sequence shown is that of IMGT allele IGLV3-32*01.</text>
</comment>
<comment type="caution">
    <text evidence="9 11">Most probably a non-functional protein that cannot participate in the synthesis of a productive immunoglobulin chain due to an altered splice site and a mutation at position 105, corresponding to the second cysteine from the disulfide bridge, potentially leading to uncorrect folding (PubMed:9619395).</text>
</comment>
<keyword id="KW-1064">Adaptive immunity</keyword>
<keyword id="KW-1003">Cell membrane</keyword>
<keyword id="KW-0325">Glycoprotein</keyword>
<keyword id="KW-0391">Immunity</keyword>
<keyword id="KW-1280">Immunoglobulin</keyword>
<keyword id="KW-0393">Immunoglobulin domain</keyword>
<keyword id="KW-0472">Membrane</keyword>
<keyword id="KW-1185">Reference proteome</keyword>
<keyword id="KW-0964">Secreted</keyword>
<keyword id="KW-0732">Signal</keyword>